<proteinExistence type="evidence at transcript level"/>
<dbReference type="EMBL" id="AB083483">
    <property type="protein sequence ID" value="BAB88941.1"/>
    <property type="molecule type" value="mRNA"/>
</dbReference>
<dbReference type="EMBL" id="AB083484">
    <property type="protein sequence ID" value="BAB88942.1"/>
    <property type="molecule type" value="mRNA"/>
</dbReference>
<dbReference type="EMBL" id="KU178863">
    <property type="protein sequence ID" value="ALQ34321.1"/>
    <property type="molecule type" value="mRNA"/>
</dbReference>
<dbReference type="EMBL" id="AC099652">
    <property type="status" value="NOT_ANNOTATED_CDS"/>
    <property type="molecule type" value="Genomic_DNA"/>
</dbReference>
<dbReference type="EMBL" id="AC245136">
    <property type="status" value="NOT_ANNOTATED_CDS"/>
    <property type="molecule type" value="Genomic_DNA"/>
</dbReference>
<dbReference type="EMBL" id="CH236959">
    <property type="protein sequence ID" value="EAL23778.1"/>
    <property type="molecule type" value="Genomic_DNA"/>
</dbReference>
<dbReference type="EMBL" id="CH471198">
    <property type="protein sequence ID" value="EAW51894.1"/>
    <property type="molecule type" value="Genomic_DNA"/>
</dbReference>
<dbReference type="EMBL" id="BC014596">
    <property type="protein sequence ID" value="AAH14596.1"/>
    <property type="molecule type" value="mRNA"/>
</dbReference>
<dbReference type="CCDS" id="CCDS5876.3">
    <molecule id="Q96L11-1"/>
</dbReference>
<dbReference type="RefSeq" id="NP_001369425.1">
    <molecule id="Q96L11-1"/>
    <property type="nucleotide sequence ID" value="NM_001382496.1"/>
</dbReference>
<dbReference type="RefSeq" id="NP_849151.2">
    <property type="nucleotide sequence ID" value="NM_178829.4"/>
</dbReference>
<dbReference type="SMR" id="Q96L11"/>
<dbReference type="BioGRID" id="126438">
    <property type="interactions" value="160"/>
</dbReference>
<dbReference type="FunCoup" id="Q96L11">
    <property type="interactions" value="1"/>
</dbReference>
<dbReference type="IntAct" id="Q96L11">
    <property type="interactions" value="119"/>
</dbReference>
<dbReference type="MINT" id="Q96L11"/>
<dbReference type="STRING" id="9606.ENSP00000386450"/>
<dbReference type="BioMuta" id="LLCFC1"/>
<dbReference type="PaxDb" id="9606-ENSP00000386450"/>
<dbReference type="Antibodypedia" id="50550">
    <property type="antibodies" value="53 antibodies from 7 providers"/>
</dbReference>
<dbReference type="DNASU" id="135927"/>
<dbReference type="Ensembl" id="ENST00000409607.5">
    <molecule id="Q96L11-1"/>
    <property type="protein sequence ID" value="ENSP00000386450.4"/>
    <property type="gene ID" value="ENSG00000165131.8"/>
</dbReference>
<dbReference type="Ensembl" id="ENST00000617608.2">
    <molecule id="Q96L11-3"/>
    <property type="protein sequence ID" value="ENSP00000484165.1"/>
    <property type="gene ID" value="ENSG00000275821.2"/>
</dbReference>
<dbReference type="GeneID" id="135927"/>
<dbReference type="MANE-Select" id="ENST00000409607.5">
    <property type="protein sequence ID" value="ENSP00000386450.4"/>
    <property type="RefSeq nucleotide sequence ID" value="NM_001382496.1"/>
    <property type="RefSeq protein sequence ID" value="NP_001369425.1"/>
</dbReference>
<dbReference type="UCSC" id="uc003wca.3">
    <molecule id="Q96L11-1"/>
    <property type="organism name" value="human"/>
</dbReference>
<dbReference type="AGR" id="HGNC:21750"/>
<dbReference type="GeneCards" id="LLCFC1"/>
<dbReference type="HGNC" id="HGNC:21750">
    <property type="gene designation" value="LLCFC1"/>
</dbReference>
<dbReference type="HPA" id="ENSG00000165131">
    <property type="expression patterns" value="Tissue enriched (testis)"/>
</dbReference>
<dbReference type="MIM" id="618946">
    <property type="type" value="gene"/>
</dbReference>
<dbReference type="neXtProt" id="NX_Q96L11"/>
<dbReference type="OpenTargets" id="ENSG00000165131"/>
<dbReference type="PharmGKB" id="PA134972511"/>
<dbReference type="VEuPathDB" id="HostDB:ENSG00000165131"/>
<dbReference type="eggNOG" id="ENOG502SF8S">
    <property type="taxonomic scope" value="Eukaryota"/>
</dbReference>
<dbReference type="GeneTree" id="ENSGT00390000018785"/>
<dbReference type="HOGENOM" id="CLU_1730804_0_0_1"/>
<dbReference type="InParanoid" id="Q96L11"/>
<dbReference type="OMA" id="HFMASSV"/>
<dbReference type="OrthoDB" id="9836289at2759"/>
<dbReference type="PAN-GO" id="Q96L11">
    <property type="GO annotations" value="1 GO annotation based on evolutionary models"/>
</dbReference>
<dbReference type="PhylomeDB" id="Q96L11"/>
<dbReference type="TreeFam" id="TF338373"/>
<dbReference type="PathwayCommons" id="Q96L11"/>
<dbReference type="SignaLink" id="Q96L11"/>
<dbReference type="BioGRID-ORCS" id="135927">
    <property type="hits" value="51 hits in 1119 CRISPR screens"/>
</dbReference>
<dbReference type="GenomeRNAi" id="135927"/>
<dbReference type="Pharos" id="Q96L11">
    <property type="development level" value="Tdark"/>
</dbReference>
<dbReference type="PRO" id="PR:Q96L11"/>
<dbReference type="Proteomes" id="UP000005640">
    <property type="component" value="Chromosome 7"/>
</dbReference>
<dbReference type="RNAct" id="Q96L11">
    <property type="molecule type" value="protein"/>
</dbReference>
<dbReference type="Bgee" id="ENSG00000165131">
    <property type="expression patterns" value="Expressed in male germ line stem cell (sensu Vertebrata) in testis and 83 other cell types or tissues"/>
</dbReference>
<dbReference type="ExpressionAtlas" id="Q96L11">
    <property type="expression patterns" value="baseline and differential"/>
</dbReference>
<dbReference type="GO" id="GO:0005576">
    <property type="term" value="C:extracellular region"/>
    <property type="evidence" value="ECO:0007669"/>
    <property type="project" value="UniProtKB-SubCell"/>
</dbReference>
<dbReference type="GO" id="GO:0007342">
    <property type="term" value="P:fusion of sperm to egg plasma membrane involved in single fertilization"/>
    <property type="evidence" value="ECO:0000250"/>
    <property type="project" value="UniProtKB"/>
</dbReference>
<dbReference type="InterPro" id="IPR031684">
    <property type="entry name" value="LLCFC1"/>
</dbReference>
<dbReference type="PANTHER" id="PTHR37348">
    <property type="entry name" value="LLLL AND CFNLAS MOTIF-CONTAINING PROTEIN 1"/>
    <property type="match status" value="1"/>
</dbReference>
<dbReference type="PANTHER" id="PTHR37348:SF1">
    <property type="entry name" value="SPERM-EGG FUSION PROTEIN LLCFC1"/>
    <property type="match status" value="1"/>
</dbReference>
<dbReference type="Pfam" id="PF15838">
    <property type="entry name" value="LLCFC1"/>
    <property type="match status" value="1"/>
</dbReference>
<accession>Q96L11</accession>
<accession>A0A0G2JPS5</accession>
<accession>A0A0S2Z637</accession>
<accession>A4D2H8</accession>
<accession>C9JTW1</accession>
<accession>Q8TDV6</accession>
<gene>
    <name evidence="6" type="primary">LLCFC1</name>
    <name type="synonym">C7orf34</name>
    <name evidence="1" type="synonym">SOF1</name>
</gene>
<organism>
    <name type="scientific">Homo sapiens</name>
    <name type="common">Human</name>
    <dbReference type="NCBI Taxonomy" id="9606"/>
    <lineage>
        <taxon>Eukaryota</taxon>
        <taxon>Metazoa</taxon>
        <taxon>Chordata</taxon>
        <taxon>Craniata</taxon>
        <taxon>Vertebrata</taxon>
        <taxon>Euteleostomi</taxon>
        <taxon>Mammalia</taxon>
        <taxon>Eutheria</taxon>
        <taxon>Euarchontoglires</taxon>
        <taxon>Primates</taxon>
        <taxon>Haplorrhini</taxon>
        <taxon>Catarrhini</taxon>
        <taxon>Hominidae</taxon>
        <taxon>Homo</taxon>
    </lineage>
</organism>
<name>LCFC1_HUMAN</name>
<reference key="1">
    <citation type="submission" date="2002-04" db="EMBL/GenBank/DDBJ databases">
        <title>CTM-1, a novel MSSP-binding protein.</title>
        <authorList>
            <person name="Ariga H."/>
        </authorList>
    </citation>
    <scope>NUCLEOTIDE SEQUENCE [MRNA] (ISOFORMS 1 AND 2)</scope>
    <source>
        <tissue>Testis</tissue>
    </source>
</reference>
<reference key="2">
    <citation type="journal article" date="2016" name="Cell">
        <title>Widespread Expansion of Protein Interaction Capabilities by Alternative Splicing.</title>
        <authorList>
            <person name="Yang X."/>
            <person name="Coulombe-Huntington J."/>
            <person name="Kang S."/>
            <person name="Sheynkman G.M."/>
            <person name="Hao T."/>
            <person name="Richardson A."/>
            <person name="Sun S."/>
            <person name="Yang F."/>
            <person name="Shen Y.A."/>
            <person name="Murray R."/>
            <person name="Spirohn K."/>
            <person name="Begg B.E."/>
            <person name="Duran-Frigola M."/>
            <person name="MacWilliams A."/>
            <person name="Pevzner S.J."/>
            <person name="Zhong Q."/>
            <person name="Trigg S.A."/>
            <person name="Tam S."/>
            <person name="Ghamsari L."/>
            <person name="Sahni N."/>
            <person name="Yi S."/>
            <person name="Rodriguez M.D."/>
            <person name="Balcha D."/>
            <person name="Tan G."/>
            <person name="Costanzo M."/>
            <person name="Andrews B."/>
            <person name="Boone C."/>
            <person name="Zhou X.J."/>
            <person name="Salehi-Ashtiani K."/>
            <person name="Charloteaux B."/>
            <person name="Chen A."/>
            <person name="Calderwood M.A."/>
            <person name="Aloy P."/>
            <person name="Roth F.P."/>
            <person name="Hill D.E."/>
            <person name="Iakoucheva L.M."/>
            <person name="Xia Y."/>
            <person name="Vidal M."/>
        </authorList>
    </citation>
    <scope>NUCLEOTIDE SEQUENCE [MRNA] (ISOFORM 3)</scope>
</reference>
<reference key="3">
    <citation type="journal article" date="2003" name="Nature">
        <title>The DNA sequence of human chromosome 7.</title>
        <authorList>
            <person name="Hillier L.W."/>
            <person name="Fulton R.S."/>
            <person name="Fulton L.A."/>
            <person name="Graves T.A."/>
            <person name="Pepin K.H."/>
            <person name="Wagner-McPherson C."/>
            <person name="Layman D."/>
            <person name="Maas J."/>
            <person name="Jaeger S."/>
            <person name="Walker R."/>
            <person name="Wylie K."/>
            <person name="Sekhon M."/>
            <person name="Becker M.C."/>
            <person name="O'Laughlin M.D."/>
            <person name="Schaller M.E."/>
            <person name="Fewell G.A."/>
            <person name="Delehaunty K.D."/>
            <person name="Miner T.L."/>
            <person name="Nash W.E."/>
            <person name="Cordes M."/>
            <person name="Du H."/>
            <person name="Sun H."/>
            <person name="Edwards J."/>
            <person name="Bradshaw-Cordum H."/>
            <person name="Ali J."/>
            <person name="Andrews S."/>
            <person name="Isak A."/>
            <person name="Vanbrunt A."/>
            <person name="Nguyen C."/>
            <person name="Du F."/>
            <person name="Lamar B."/>
            <person name="Courtney L."/>
            <person name="Kalicki J."/>
            <person name="Ozersky P."/>
            <person name="Bielicki L."/>
            <person name="Scott K."/>
            <person name="Holmes A."/>
            <person name="Harkins R."/>
            <person name="Harris A."/>
            <person name="Strong C.M."/>
            <person name="Hou S."/>
            <person name="Tomlinson C."/>
            <person name="Dauphin-Kohlberg S."/>
            <person name="Kozlowicz-Reilly A."/>
            <person name="Leonard S."/>
            <person name="Rohlfing T."/>
            <person name="Rock S.M."/>
            <person name="Tin-Wollam A.-M."/>
            <person name="Abbott A."/>
            <person name="Minx P."/>
            <person name="Maupin R."/>
            <person name="Strowmatt C."/>
            <person name="Latreille P."/>
            <person name="Miller N."/>
            <person name="Johnson D."/>
            <person name="Murray J."/>
            <person name="Woessner J.P."/>
            <person name="Wendl M.C."/>
            <person name="Yang S.-P."/>
            <person name="Schultz B.R."/>
            <person name="Wallis J.W."/>
            <person name="Spieth J."/>
            <person name="Bieri T.A."/>
            <person name="Nelson J.O."/>
            <person name="Berkowicz N."/>
            <person name="Wohldmann P.E."/>
            <person name="Cook L.L."/>
            <person name="Hickenbotham M.T."/>
            <person name="Eldred J."/>
            <person name="Williams D."/>
            <person name="Bedell J.A."/>
            <person name="Mardis E.R."/>
            <person name="Clifton S.W."/>
            <person name="Chissoe S.L."/>
            <person name="Marra M.A."/>
            <person name="Raymond C."/>
            <person name="Haugen E."/>
            <person name="Gillett W."/>
            <person name="Zhou Y."/>
            <person name="James R."/>
            <person name="Phelps K."/>
            <person name="Iadanoto S."/>
            <person name="Bubb K."/>
            <person name="Simms E."/>
            <person name="Levy R."/>
            <person name="Clendenning J."/>
            <person name="Kaul R."/>
            <person name="Kent W.J."/>
            <person name="Furey T.S."/>
            <person name="Baertsch R.A."/>
            <person name="Brent M.R."/>
            <person name="Keibler E."/>
            <person name="Flicek P."/>
            <person name="Bork P."/>
            <person name="Suyama M."/>
            <person name="Bailey J.A."/>
            <person name="Portnoy M.E."/>
            <person name="Torrents D."/>
            <person name="Chinwalla A.T."/>
            <person name="Gish W.R."/>
            <person name="Eddy S.R."/>
            <person name="McPherson J.D."/>
            <person name="Olson M.V."/>
            <person name="Eichler E.E."/>
            <person name="Green E.D."/>
            <person name="Waterston R.H."/>
            <person name="Wilson R.K."/>
        </authorList>
    </citation>
    <scope>NUCLEOTIDE SEQUENCE [LARGE SCALE GENOMIC DNA]</scope>
</reference>
<reference key="4">
    <citation type="submission" date="2005-09" db="EMBL/GenBank/DDBJ databases">
        <authorList>
            <person name="Mural R.J."/>
            <person name="Istrail S."/>
            <person name="Sutton G.G."/>
            <person name="Florea L."/>
            <person name="Halpern A.L."/>
            <person name="Mobarry C.M."/>
            <person name="Lippert R."/>
            <person name="Walenz B."/>
            <person name="Shatkay H."/>
            <person name="Dew I."/>
            <person name="Miller J.R."/>
            <person name="Flanigan M.J."/>
            <person name="Edwards N.J."/>
            <person name="Bolanos R."/>
            <person name="Fasulo D."/>
            <person name="Halldorsson B.V."/>
            <person name="Hannenhalli S."/>
            <person name="Turner R."/>
            <person name="Yooseph S."/>
            <person name="Lu F."/>
            <person name="Nusskern D.R."/>
            <person name="Shue B.C."/>
            <person name="Zheng X.H."/>
            <person name="Zhong F."/>
            <person name="Delcher A.L."/>
            <person name="Huson D.H."/>
            <person name="Kravitz S.A."/>
            <person name="Mouchard L."/>
            <person name="Reinert K."/>
            <person name="Remington K.A."/>
            <person name="Clark A.G."/>
            <person name="Waterman M.S."/>
            <person name="Eichler E.E."/>
            <person name="Adams M.D."/>
            <person name="Hunkapiller M.W."/>
            <person name="Myers E.W."/>
            <person name="Venter J.C."/>
        </authorList>
    </citation>
    <scope>NUCLEOTIDE SEQUENCE [LARGE SCALE GENOMIC DNA]</scope>
</reference>
<reference key="5">
    <citation type="journal article" date="2003" name="Science">
        <title>Human chromosome 7: DNA sequence and biology.</title>
        <authorList>
            <person name="Scherer S.W."/>
            <person name="Cheung J."/>
            <person name="MacDonald J.R."/>
            <person name="Osborne L.R."/>
            <person name="Nakabayashi K."/>
            <person name="Herbrick J.-A."/>
            <person name="Carson A.R."/>
            <person name="Parker-Katiraee L."/>
            <person name="Skaug J."/>
            <person name="Khaja R."/>
            <person name="Zhang J."/>
            <person name="Hudek A.K."/>
            <person name="Li M."/>
            <person name="Haddad M."/>
            <person name="Duggan G.E."/>
            <person name="Fernandez B.A."/>
            <person name="Kanematsu E."/>
            <person name="Gentles S."/>
            <person name="Christopoulos C.C."/>
            <person name="Choufani S."/>
            <person name="Kwasnicka D."/>
            <person name="Zheng X.H."/>
            <person name="Lai Z."/>
            <person name="Nusskern D.R."/>
            <person name="Zhang Q."/>
            <person name="Gu Z."/>
            <person name="Lu F."/>
            <person name="Zeesman S."/>
            <person name="Nowaczyk M.J."/>
            <person name="Teshima I."/>
            <person name="Chitayat D."/>
            <person name="Shuman C."/>
            <person name="Weksberg R."/>
            <person name="Zackai E.H."/>
            <person name="Grebe T.A."/>
            <person name="Cox S.R."/>
            <person name="Kirkpatrick S.J."/>
            <person name="Rahman N."/>
            <person name="Friedman J.M."/>
            <person name="Heng H.H.Q."/>
            <person name="Pelicci P.G."/>
            <person name="Lo-Coco F."/>
            <person name="Belloni E."/>
            <person name="Shaffer L.G."/>
            <person name="Pober B."/>
            <person name="Morton C.C."/>
            <person name="Gusella J.F."/>
            <person name="Bruns G.A.P."/>
            <person name="Korf B.R."/>
            <person name="Quade B.J."/>
            <person name="Ligon A.H."/>
            <person name="Ferguson H."/>
            <person name="Higgins A.W."/>
            <person name="Leach N.T."/>
            <person name="Herrick S.R."/>
            <person name="Lemyre E."/>
            <person name="Farra C.G."/>
            <person name="Kim H.-G."/>
            <person name="Summers A.M."/>
            <person name="Gripp K.W."/>
            <person name="Roberts W."/>
            <person name="Szatmari P."/>
            <person name="Winsor E.J.T."/>
            <person name="Grzeschik K.-H."/>
            <person name="Teebi A."/>
            <person name="Minassian B.A."/>
            <person name="Kere J."/>
            <person name="Armengol L."/>
            <person name="Pujana M.A."/>
            <person name="Estivill X."/>
            <person name="Wilson M.D."/>
            <person name="Koop B.F."/>
            <person name="Tosi S."/>
            <person name="Moore G.E."/>
            <person name="Boright A.P."/>
            <person name="Zlotorynski E."/>
            <person name="Kerem B."/>
            <person name="Kroisel P.M."/>
            <person name="Petek E."/>
            <person name="Oscier D.G."/>
            <person name="Mould S.J."/>
            <person name="Doehner H."/>
            <person name="Doehner K."/>
            <person name="Rommens J.M."/>
            <person name="Vincent J.B."/>
            <person name="Venter J.C."/>
            <person name="Li P.W."/>
            <person name="Mural R.J."/>
            <person name="Adams M.D."/>
            <person name="Tsui L.-C."/>
        </authorList>
    </citation>
    <scope>NUCLEOTIDE SEQUENCE [LARGE SCALE GENOMIC DNA]</scope>
</reference>
<reference key="6">
    <citation type="journal article" date="2004" name="Genome Res.">
        <title>The status, quality, and expansion of the NIH full-length cDNA project: the Mammalian Gene Collection (MGC).</title>
        <authorList>
            <consortium name="The MGC Project Team"/>
        </authorList>
    </citation>
    <scope>NUCLEOTIDE SEQUENCE [LARGE SCALE MRNA] (ISOFORM 1)</scope>
    <source>
        <tissue>Testis</tissue>
    </source>
</reference>
<feature type="signal peptide" evidence="2">
    <location>
        <begin position="1"/>
        <end position="28"/>
    </location>
</feature>
<feature type="chain" id="PRO_0000019546" description="Sperm-egg fusion protein LLCFC1">
    <location>
        <begin position="29"/>
        <end position="122"/>
    </location>
</feature>
<feature type="region of interest" description="Disordered" evidence="3">
    <location>
        <begin position="27"/>
        <end position="51"/>
    </location>
</feature>
<feature type="compositionally biased region" description="Polar residues" evidence="3">
    <location>
        <begin position="38"/>
        <end position="49"/>
    </location>
</feature>
<feature type="splice variant" id="VSP_059617" description="In isoform 3.">
    <original>M</original>
    <variation>MGQEVHGSCWALGAGGGQRQWVGRSM</variation>
    <location>
        <position position="1"/>
    </location>
</feature>
<feature type="splice variant" id="VSP_014743" description="In isoform 2." evidence="4">
    <original>DQ</original>
    <variation>GS</variation>
    <location>
        <begin position="45"/>
        <end position="46"/>
    </location>
</feature>
<feature type="splice variant" id="VSP_014744" description="In isoform 2." evidence="4">
    <location>
        <begin position="47"/>
        <end position="122"/>
    </location>
</feature>
<keyword id="KW-0025">Alternative splicing</keyword>
<keyword id="KW-0278">Fertilization</keyword>
<keyword id="KW-1185">Reference proteome</keyword>
<keyword id="KW-0964">Secreted</keyword>
<keyword id="KW-0732">Signal</keyword>
<evidence type="ECO:0000250" key="1">
    <source>
        <dbReference type="UniProtKB" id="Q9D9P8"/>
    </source>
</evidence>
<evidence type="ECO:0000255" key="2"/>
<evidence type="ECO:0000256" key="3">
    <source>
        <dbReference type="SAM" id="MobiDB-lite"/>
    </source>
</evidence>
<evidence type="ECO:0000303" key="4">
    <source ref="1"/>
</evidence>
<evidence type="ECO:0000305" key="5"/>
<evidence type="ECO:0000312" key="6">
    <source>
        <dbReference type="HGNC" id="HGNC:21750"/>
    </source>
</evidence>
<sequence length="122" mass="13527">MPPLAPQLCRAVFLVPILLLLQVKPLNGSPGPKDGSQTEKTPSADQNQEQFEEHFVASSVGEMWQVVDMAQQEEDQSSKTAAVHKHSFHLSFCFSLASVMVFSGGPLRRTFPNIQLCFMLTH</sequence>
<comment type="function">
    <text evidence="1">Sperm protein required for fusion of sperm with the egg membrane during fertilization.</text>
</comment>
<comment type="subcellular location">
    <subcellularLocation>
        <location evidence="5">Secreted</location>
    </subcellularLocation>
</comment>
<comment type="alternative products">
    <event type="alternative splicing"/>
    <isoform>
        <id>Q96L11-1</id>
        <name>1</name>
        <name>CTM-1beta</name>
        <sequence type="displayed"/>
    </isoform>
    <isoform>
        <id>Q96L11-2</id>
        <name>2</name>
        <name>CTM-1alpha</name>
        <sequence type="described" ref="VSP_014743 VSP_014744"/>
    </isoform>
    <isoform>
        <id>Q96L11-3</id>
        <name>3</name>
        <sequence type="described" ref="VSP_059617"/>
    </isoform>
</comment>
<protein>
    <recommendedName>
        <fullName evidence="5">Sperm-egg fusion protein LLCFC1</fullName>
    </recommendedName>
    <alternativeName>
        <fullName evidence="6">LLLL and CFNLAS motif-containing protein 1</fullName>
    </alternativeName>
    <alternativeName>
        <fullName evidence="4">MSSP-binding protein CTM-1</fullName>
    </alternativeName>
    <alternativeName>
        <fullName evidence="1">Sperm-oocyte fusion required protein 1</fullName>
    </alternativeName>
</protein>